<keyword id="KW-0687">Ribonucleoprotein</keyword>
<keyword id="KW-0689">Ribosomal protein</keyword>
<keyword id="KW-0694">RNA-binding</keyword>
<keyword id="KW-0699">rRNA-binding</keyword>
<protein>
    <recommendedName>
        <fullName evidence="1">Small ribosomal subunit protein uS17</fullName>
    </recommendedName>
    <alternativeName>
        <fullName evidence="2">30S ribosomal protein S17</fullName>
    </alternativeName>
</protein>
<dbReference type="EMBL" id="AE017220">
    <property type="protein sequence ID" value="AAX67271.1"/>
    <property type="molecule type" value="Genomic_DNA"/>
</dbReference>
<dbReference type="RefSeq" id="WP_000130101.1">
    <property type="nucleotide sequence ID" value="NC_006905.1"/>
</dbReference>
<dbReference type="SMR" id="Q57J41"/>
<dbReference type="GeneID" id="66757766"/>
<dbReference type="KEGG" id="sec:SCH_3365"/>
<dbReference type="HOGENOM" id="CLU_073626_1_1_6"/>
<dbReference type="Proteomes" id="UP000000538">
    <property type="component" value="Chromosome"/>
</dbReference>
<dbReference type="GO" id="GO:0022627">
    <property type="term" value="C:cytosolic small ribosomal subunit"/>
    <property type="evidence" value="ECO:0007669"/>
    <property type="project" value="TreeGrafter"/>
</dbReference>
<dbReference type="GO" id="GO:0019843">
    <property type="term" value="F:rRNA binding"/>
    <property type="evidence" value="ECO:0007669"/>
    <property type="project" value="UniProtKB-UniRule"/>
</dbReference>
<dbReference type="GO" id="GO:0003735">
    <property type="term" value="F:structural constituent of ribosome"/>
    <property type="evidence" value="ECO:0007669"/>
    <property type="project" value="InterPro"/>
</dbReference>
<dbReference type="GO" id="GO:0006412">
    <property type="term" value="P:translation"/>
    <property type="evidence" value="ECO:0007669"/>
    <property type="project" value="UniProtKB-UniRule"/>
</dbReference>
<dbReference type="CDD" id="cd00364">
    <property type="entry name" value="Ribosomal_uS17"/>
    <property type="match status" value="1"/>
</dbReference>
<dbReference type="FunFam" id="2.40.50.140:FF:000014">
    <property type="entry name" value="30S ribosomal protein S17"/>
    <property type="match status" value="1"/>
</dbReference>
<dbReference type="Gene3D" id="2.40.50.140">
    <property type="entry name" value="Nucleic acid-binding proteins"/>
    <property type="match status" value="1"/>
</dbReference>
<dbReference type="HAMAP" id="MF_01345_B">
    <property type="entry name" value="Ribosomal_uS17_B"/>
    <property type="match status" value="1"/>
</dbReference>
<dbReference type="InterPro" id="IPR012340">
    <property type="entry name" value="NA-bd_OB-fold"/>
</dbReference>
<dbReference type="InterPro" id="IPR000266">
    <property type="entry name" value="Ribosomal_uS17"/>
</dbReference>
<dbReference type="InterPro" id="IPR019984">
    <property type="entry name" value="Ribosomal_uS17_bact/chlr"/>
</dbReference>
<dbReference type="InterPro" id="IPR019979">
    <property type="entry name" value="Ribosomal_uS17_CS"/>
</dbReference>
<dbReference type="NCBIfam" id="NF004123">
    <property type="entry name" value="PRK05610.1"/>
    <property type="match status" value="1"/>
</dbReference>
<dbReference type="NCBIfam" id="TIGR03635">
    <property type="entry name" value="uS17_bact"/>
    <property type="match status" value="1"/>
</dbReference>
<dbReference type="PANTHER" id="PTHR10744">
    <property type="entry name" value="40S RIBOSOMAL PROTEIN S11 FAMILY MEMBER"/>
    <property type="match status" value="1"/>
</dbReference>
<dbReference type="PANTHER" id="PTHR10744:SF1">
    <property type="entry name" value="SMALL RIBOSOMAL SUBUNIT PROTEIN US17M"/>
    <property type="match status" value="1"/>
</dbReference>
<dbReference type="Pfam" id="PF00366">
    <property type="entry name" value="Ribosomal_S17"/>
    <property type="match status" value="1"/>
</dbReference>
<dbReference type="PRINTS" id="PR00973">
    <property type="entry name" value="RIBOSOMALS17"/>
</dbReference>
<dbReference type="SUPFAM" id="SSF50249">
    <property type="entry name" value="Nucleic acid-binding proteins"/>
    <property type="match status" value="1"/>
</dbReference>
<dbReference type="PROSITE" id="PS00056">
    <property type="entry name" value="RIBOSOMAL_S17"/>
    <property type="match status" value="1"/>
</dbReference>
<accession>Q57J41</accession>
<evidence type="ECO:0000255" key="1">
    <source>
        <dbReference type="HAMAP-Rule" id="MF_01345"/>
    </source>
</evidence>
<evidence type="ECO:0000305" key="2"/>
<reference key="1">
    <citation type="journal article" date="2005" name="Nucleic Acids Res.">
        <title>The genome sequence of Salmonella enterica serovar Choleraesuis, a highly invasive and resistant zoonotic pathogen.</title>
        <authorList>
            <person name="Chiu C.-H."/>
            <person name="Tang P."/>
            <person name="Chu C."/>
            <person name="Hu S."/>
            <person name="Bao Q."/>
            <person name="Yu J."/>
            <person name="Chou Y.-Y."/>
            <person name="Wang H.-S."/>
            <person name="Lee Y.-S."/>
        </authorList>
    </citation>
    <scope>NUCLEOTIDE SEQUENCE [LARGE SCALE GENOMIC DNA]</scope>
    <source>
        <strain>SC-B67</strain>
    </source>
</reference>
<proteinExistence type="inferred from homology"/>
<organism>
    <name type="scientific">Salmonella choleraesuis (strain SC-B67)</name>
    <dbReference type="NCBI Taxonomy" id="321314"/>
    <lineage>
        <taxon>Bacteria</taxon>
        <taxon>Pseudomonadati</taxon>
        <taxon>Pseudomonadota</taxon>
        <taxon>Gammaproteobacteria</taxon>
        <taxon>Enterobacterales</taxon>
        <taxon>Enterobacteriaceae</taxon>
        <taxon>Salmonella</taxon>
    </lineage>
</organism>
<gene>
    <name evidence="1" type="primary">rpsQ</name>
    <name type="ordered locus">SCH_3365</name>
</gene>
<comment type="function">
    <text evidence="1">One of the primary rRNA binding proteins, it binds specifically to the 5'-end of 16S ribosomal RNA.</text>
</comment>
<comment type="subunit">
    <text evidence="1">Part of the 30S ribosomal subunit.</text>
</comment>
<comment type="similarity">
    <text evidence="1">Belongs to the universal ribosomal protein uS17 family.</text>
</comment>
<name>RS17_SALCH</name>
<feature type="chain" id="PRO_0000233560" description="Small ribosomal subunit protein uS17">
    <location>
        <begin position="1"/>
        <end position="84"/>
    </location>
</feature>
<sequence>MTDKIRTLQGRVVSDKMEKSIVVAIERFVKHPIYGKFIKRTTKMHVHDENNECGIGDVVEIRECRPLSKTKSWTLVRVVEKAVL</sequence>